<reference key="1">
    <citation type="journal article" date="2000" name="Science">
        <title>Complete genome sequence of Neisseria meningitidis serogroup B strain MC58.</title>
        <authorList>
            <person name="Tettelin H."/>
            <person name="Saunders N.J."/>
            <person name="Heidelberg J.F."/>
            <person name="Jeffries A.C."/>
            <person name="Nelson K.E."/>
            <person name="Eisen J.A."/>
            <person name="Ketchum K.A."/>
            <person name="Hood D.W."/>
            <person name="Peden J.F."/>
            <person name="Dodson R.J."/>
            <person name="Nelson W.C."/>
            <person name="Gwinn M.L."/>
            <person name="DeBoy R.T."/>
            <person name="Peterson J.D."/>
            <person name="Hickey E.K."/>
            <person name="Haft D.H."/>
            <person name="Salzberg S.L."/>
            <person name="White O."/>
            <person name="Fleischmann R.D."/>
            <person name="Dougherty B.A."/>
            <person name="Mason T.M."/>
            <person name="Ciecko A."/>
            <person name="Parksey D.S."/>
            <person name="Blair E."/>
            <person name="Cittone H."/>
            <person name="Clark E.B."/>
            <person name="Cotton M.D."/>
            <person name="Utterback T.R."/>
            <person name="Khouri H.M."/>
            <person name="Qin H."/>
            <person name="Vamathevan J.J."/>
            <person name="Gill J."/>
            <person name="Scarlato V."/>
            <person name="Masignani V."/>
            <person name="Pizza M."/>
            <person name="Grandi G."/>
            <person name="Sun L."/>
            <person name="Smith H.O."/>
            <person name="Fraser C.M."/>
            <person name="Moxon E.R."/>
            <person name="Rappuoli R."/>
            <person name="Venter J.C."/>
        </authorList>
    </citation>
    <scope>NUCLEOTIDE SEQUENCE [LARGE SCALE GENOMIC DNA]</scope>
    <source>
        <strain>ATCC BAA-335 / MC58</strain>
    </source>
</reference>
<name>TYSY_NEIMB</name>
<evidence type="ECO:0000255" key="1">
    <source>
        <dbReference type="HAMAP-Rule" id="MF_00008"/>
    </source>
</evidence>
<keyword id="KW-0963">Cytoplasm</keyword>
<keyword id="KW-0489">Methyltransferase</keyword>
<keyword id="KW-0545">Nucleotide biosynthesis</keyword>
<keyword id="KW-1185">Reference proteome</keyword>
<keyword id="KW-0808">Transferase</keyword>
<accession>Q9JY72</accession>
<protein>
    <recommendedName>
        <fullName evidence="1">Thymidylate synthase</fullName>
        <shortName evidence="1">TS</shortName>
        <shortName evidence="1">TSase</shortName>
        <ecNumber evidence="1">2.1.1.45</ecNumber>
    </recommendedName>
</protein>
<organism>
    <name type="scientific">Neisseria meningitidis serogroup B (strain ATCC BAA-335 / MC58)</name>
    <dbReference type="NCBI Taxonomy" id="122586"/>
    <lineage>
        <taxon>Bacteria</taxon>
        <taxon>Pseudomonadati</taxon>
        <taxon>Pseudomonadota</taxon>
        <taxon>Betaproteobacteria</taxon>
        <taxon>Neisseriales</taxon>
        <taxon>Neisseriaceae</taxon>
        <taxon>Neisseria</taxon>
    </lineage>
</organism>
<sequence>MKAYLDLMRHVLDNGTDKSDRTGTGTRSVFGYQMRFDLGKGFPLLTTKKLHLRSIIHELLWFLKGDTNIKYLKDNNVSIWDEWADENGDLGPVYGYQWRNWPAPDGRHIDQIANVLEQIKKNPDSRRLIVSAWNPALVDEMALPPCHALFQFYVADGKLSCQLYQRSADIFLGVPFNIASYALLTMMMAQVCGLEAGEFVHTFGDAHLYRNHFEQAALQLEREPRALPVMKINPEVKDLFSFKFEDFELEGYDPHPHIKAAVSV</sequence>
<proteinExistence type="inferred from homology"/>
<gene>
    <name evidence="1" type="primary">thyA</name>
    <name type="ordered locus">NMB1709</name>
</gene>
<feature type="chain" id="PRO_0000140994" description="Thymidylate synthase">
    <location>
        <begin position="1"/>
        <end position="264"/>
    </location>
</feature>
<feature type="active site" description="Nucleophile" evidence="1">
    <location>
        <position position="146"/>
    </location>
</feature>
<feature type="binding site" description="in other chain" evidence="1">
    <location>
        <position position="21"/>
    </location>
    <ligand>
        <name>dUMP</name>
        <dbReference type="ChEBI" id="CHEBI:246422"/>
        <note>ligand shared between dimeric partners</note>
    </ligand>
</feature>
<feature type="binding site" evidence="1">
    <location>
        <position position="51"/>
    </location>
    <ligand>
        <name>(6R)-5,10-methylene-5,6,7,8-tetrahydrofolate</name>
        <dbReference type="ChEBI" id="CHEBI:15636"/>
    </ligand>
</feature>
<feature type="binding site" evidence="1">
    <location>
        <begin position="126"/>
        <end position="127"/>
    </location>
    <ligand>
        <name>dUMP</name>
        <dbReference type="ChEBI" id="CHEBI:246422"/>
        <note>ligand shared between dimeric partners</note>
    </ligand>
</feature>
<feature type="binding site" description="in other chain" evidence="1">
    <location>
        <begin position="166"/>
        <end position="169"/>
    </location>
    <ligand>
        <name>dUMP</name>
        <dbReference type="ChEBI" id="CHEBI:246422"/>
        <note>ligand shared between dimeric partners</note>
    </ligand>
</feature>
<feature type="binding site" evidence="1">
    <location>
        <position position="169"/>
    </location>
    <ligand>
        <name>(6R)-5,10-methylene-5,6,7,8-tetrahydrofolate</name>
        <dbReference type="ChEBI" id="CHEBI:15636"/>
    </ligand>
</feature>
<feature type="binding site" description="in other chain" evidence="1">
    <location>
        <position position="177"/>
    </location>
    <ligand>
        <name>dUMP</name>
        <dbReference type="ChEBI" id="CHEBI:246422"/>
        <note>ligand shared between dimeric partners</note>
    </ligand>
</feature>
<feature type="binding site" description="in other chain" evidence="1">
    <location>
        <begin position="207"/>
        <end position="209"/>
    </location>
    <ligand>
        <name>dUMP</name>
        <dbReference type="ChEBI" id="CHEBI:246422"/>
        <note>ligand shared between dimeric partners</note>
    </ligand>
</feature>
<feature type="binding site" evidence="1">
    <location>
        <position position="263"/>
    </location>
    <ligand>
        <name>(6R)-5,10-methylene-5,6,7,8-tetrahydrofolate</name>
        <dbReference type="ChEBI" id="CHEBI:15636"/>
    </ligand>
</feature>
<comment type="function">
    <text evidence="1">Catalyzes the reductive methylation of 2'-deoxyuridine-5'-monophosphate (dUMP) to 2'-deoxythymidine-5'-monophosphate (dTMP) while utilizing 5,10-methylenetetrahydrofolate (mTHF) as the methyl donor and reductant in the reaction, yielding dihydrofolate (DHF) as a by-product. This enzymatic reaction provides an intracellular de novo source of dTMP, an essential precursor for DNA biosynthesis.</text>
</comment>
<comment type="catalytic activity">
    <reaction evidence="1">
        <text>dUMP + (6R)-5,10-methylene-5,6,7,8-tetrahydrofolate = 7,8-dihydrofolate + dTMP</text>
        <dbReference type="Rhea" id="RHEA:12104"/>
        <dbReference type="ChEBI" id="CHEBI:15636"/>
        <dbReference type="ChEBI" id="CHEBI:57451"/>
        <dbReference type="ChEBI" id="CHEBI:63528"/>
        <dbReference type="ChEBI" id="CHEBI:246422"/>
        <dbReference type="EC" id="2.1.1.45"/>
    </reaction>
</comment>
<comment type="pathway">
    <text evidence="1">Pyrimidine metabolism; dTTP biosynthesis.</text>
</comment>
<comment type="subunit">
    <text evidence="1">Homodimer.</text>
</comment>
<comment type="subcellular location">
    <subcellularLocation>
        <location evidence="1">Cytoplasm</location>
    </subcellularLocation>
</comment>
<comment type="similarity">
    <text evidence="1">Belongs to the thymidylate synthase family. Bacterial-type ThyA subfamily.</text>
</comment>
<dbReference type="EC" id="2.1.1.45" evidence="1"/>
<dbReference type="EMBL" id="AE002098">
    <property type="protein sequence ID" value="AAF42056.1"/>
    <property type="molecule type" value="Genomic_DNA"/>
</dbReference>
<dbReference type="PIR" id="G81050">
    <property type="entry name" value="G81050"/>
</dbReference>
<dbReference type="RefSeq" id="NP_274712.1">
    <property type="nucleotide sequence ID" value="NC_003112.2"/>
</dbReference>
<dbReference type="RefSeq" id="WP_002212612.1">
    <property type="nucleotide sequence ID" value="NC_003112.2"/>
</dbReference>
<dbReference type="SMR" id="Q9JY72"/>
<dbReference type="FunCoup" id="Q9JY72">
    <property type="interactions" value="355"/>
</dbReference>
<dbReference type="STRING" id="122586.NMB1709"/>
<dbReference type="PaxDb" id="122586-NMB1709"/>
<dbReference type="KEGG" id="nme:NMB1709"/>
<dbReference type="PATRIC" id="fig|122586.8.peg.2194"/>
<dbReference type="HOGENOM" id="CLU_021669_0_0_4"/>
<dbReference type="InParanoid" id="Q9JY72"/>
<dbReference type="OrthoDB" id="9774633at2"/>
<dbReference type="UniPathway" id="UPA00575"/>
<dbReference type="Proteomes" id="UP000000425">
    <property type="component" value="Chromosome"/>
</dbReference>
<dbReference type="GO" id="GO:0005829">
    <property type="term" value="C:cytosol"/>
    <property type="evidence" value="ECO:0000318"/>
    <property type="project" value="GO_Central"/>
</dbReference>
<dbReference type="GO" id="GO:0004799">
    <property type="term" value="F:thymidylate synthase activity"/>
    <property type="evidence" value="ECO:0000318"/>
    <property type="project" value="GO_Central"/>
</dbReference>
<dbReference type="GO" id="GO:0006231">
    <property type="term" value="P:dTMP biosynthetic process"/>
    <property type="evidence" value="ECO:0000318"/>
    <property type="project" value="GO_Central"/>
</dbReference>
<dbReference type="GO" id="GO:0006235">
    <property type="term" value="P:dTTP biosynthetic process"/>
    <property type="evidence" value="ECO:0007669"/>
    <property type="project" value="UniProtKB-UniRule"/>
</dbReference>
<dbReference type="GO" id="GO:0032259">
    <property type="term" value="P:methylation"/>
    <property type="evidence" value="ECO:0007669"/>
    <property type="project" value="UniProtKB-KW"/>
</dbReference>
<dbReference type="CDD" id="cd00351">
    <property type="entry name" value="TS_Pyrimidine_HMase"/>
    <property type="match status" value="1"/>
</dbReference>
<dbReference type="FunFam" id="3.30.572.10:FF:000001">
    <property type="entry name" value="Thymidylate synthase"/>
    <property type="match status" value="1"/>
</dbReference>
<dbReference type="Gene3D" id="3.30.572.10">
    <property type="entry name" value="Thymidylate synthase/dCMP hydroxymethylase domain"/>
    <property type="match status" value="1"/>
</dbReference>
<dbReference type="HAMAP" id="MF_00008">
    <property type="entry name" value="Thymidy_synth_bact"/>
    <property type="match status" value="1"/>
</dbReference>
<dbReference type="InterPro" id="IPR045097">
    <property type="entry name" value="Thymidate_synth/dCMP_Mease"/>
</dbReference>
<dbReference type="InterPro" id="IPR023451">
    <property type="entry name" value="Thymidate_synth/dCMP_Mease_dom"/>
</dbReference>
<dbReference type="InterPro" id="IPR036926">
    <property type="entry name" value="Thymidate_synth/dCMP_Mease_sf"/>
</dbReference>
<dbReference type="InterPro" id="IPR000398">
    <property type="entry name" value="Thymidylate_synthase"/>
</dbReference>
<dbReference type="InterPro" id="IPR020940">
    <property type="entry name" value="Thymidylate_synthase_AS"/>
</dbReference>
<dbReference type="NCBIfam" id="NF002497">
    <property type="entry name" value="PRK01827.1-3"/>
    <property type="match status" value="1"/>
</dbReference>
<dbReference type="NCBIfam" id="NF002499">
    <property type="entry name" value="PRK01827.1-5"/>
    <property type="match status" value="1"/>
</dbReference>
<dbReference type="NCBIfam" id="TIGR03284">
    <property type="entry name" value="thym_sym"/>
    <property type="match status" value="2"/>
</dbReference>
<dbReference type="PANTHER" id="PTHR11548:SF9">
    <property type="entry name" value="THYMIDYLATE SYNTHASE"/>
    <property type="match status" value="1"/>
</dbReference>
<dbReference type="PANTHER" id="PTHR11548">
    <property type="entry name" value="THYMIDYLATE SYNTHASE 1"/>
    <property type="match status" value="1"/>
</dbReference>
<dbReference type="Pfam" id="PF00303">
    <property type="entry name" value="Thymidylat_synt"/>
    <property type="match status" value="1"/>
</dbReference>
<dbReference type="PRINTS" id="PR00108">
    <property type="entry name" value="THYMDSNTHASE"/>
</dbReference>
<dbReference type="SUPFAM" id="SSF55831">
    <property type="entry name" value="Thymidylate synthase/dCMP hydroxymethylase"/>
    <property type="match status" value="1"/>
</dbReference>
<dbReference type="PROSITE" id="PS00091">
    <property type="entry name" value="THYMIDYLATE_SYNTHASE"/>
    <property type="match status" value="1"/>
</dbReference>